<name>NADK1_PROMA</name>
<organism>
    <name type="scientific">Prochlorococcus marinus (strain SARG / CCMP1375 / SS120)</name>
    <dbReference type="NCBI Taxonomy" id="167539"/>
    <lineage>
        <taxon>Bacteria</taxon>
        <taxon>Bacillati</taxon>
        <taxon>Cyanobacteriota</taxon>
        <taxon>Cyanophyceae</taxon>
        <taxon>Synechococcales</taxon>
        <taxon>Prochlorococcaceae</taxon>
        <taxon>Prochlorococcus</taxon>
    </lineage>
</organism>
<feature type="chain" id="PRO_0000229666" description="NAD kinase 1">
    <location>
        <begin position="1"/>
        <end position="307"/>
    </location>
</feature>
<feature type="active site" description="Proton acceptor" evidence="1">
    <location>
        <position position="67"/>
    </location>
</feature>
<feature type="binding site" evidence="1">
    <location>
        <begin position="67"/>
        <end position="68"/>
    </location>
    <ligand>
        <name>NAD(+)</name>
        <dbReference type="ChEBI" id="CHEBI:57540"/>
    </ligand>
</feature>
<feature type="binding site" evidence="1">
    <location>
        <begin position="149"/>
        <end position="150"/>
    </location>
    <ligand>
        <name>NAD(+)</name>
        <dbReference type="ChEBI" id="CHEBI:57540"/>
    </ligand>
</feature>
<feature type="binding site" evidence="1">
    <location>
        <position position="179"/>
    </location>
    <ligand>
        <name>NAD(+)</name>
        <dbReference type="ChEBI" id="CHEBI:57540"/>
    </ligand>
</feature>
<feature type="binding site" evidence="1">
    <location>
        <position position="181"/>
    </location>
    <ligand>
        <name>NAD(+)</name>
        <dbReference type="ChEBI" id="CHEBI:57540"/>
    </ligand>
</feature>
<comment type="function">
    <text evidence="1">Involved in the regulation of the intracellular balance of NAD and NADP, and is a key enzyme in the biosynthesis of NADP. Catalyzes specifically the phosphorylation on 2'-hydroxyl of the adenosine moiety of NAD to yield NADP.</text>
</comment>
<comment type="catalytic activity">
    <reaction evidence="1">
        <text>NAD(+) + ATP = ADP + NADP(+) + H(+)</text>
        <dbReference type="Rhea" id="RHEA:18629"/>
        <dbReference type="ChEBI" id="CHEBI:15378"/>
        <dbReference type="ChEBI" id="CHEBI:30616"/>
        <dbReference type="ChEBI" id="CHEBI:57540"/>
        <dbReference type="ChEBI" id="CHEBI:58349"/>
        <dbReference type="ChEBI" id="CHEBI:456216"/>
        <dbReference type="EC" id="2.7.1.23"/>
    </reaction>
</comment>
<comment type="cofactor">
    <cofactor evidence="1">
        <name>a divalent metal cation</name>
        <dbReference type="ChEBI" id="CHEBI:60240"/>
    </cofactor>
</comment>
<comment type="subcellular location">
    <subcellularLocation>
        <location evidence="1">Cytoplasm</location>
    </subcellularLocation>
</comment>
<comment type="similarity">
    <text evidence="1">Belongs to the NAD kinase family.</text>
</comment>
<proteinExistence type="inferred from homology"/>
<keyword id="KW-0067">ATP-binding</keyword>
<keyword id="KW-0963">Cytoplasm</keyword>
<keyword id="KW-0418">Kinase</keyword>
<keyword id="KW-0520">NAD</keyword>
<keyword id="KW-0521">NADP</keyword>
<keyword id="KW-0547">Nucleotide-binding</keyword>
<keyword id="KW-1185">Reference proteome</keyword>
<keyword id="KW-0808">Transferase</keyword>
<dbReference type="EC" id="2.7.1.23" evidence="1"/>
<dbReference type="EMBL" id="AE017126">
    <property type="protein sequence ID" value="AAP99226.1"/>
    <property type="molecule type" value="Genomic_DNA"/>
</dbReference>
<dbReference type="RefSeq" id="NP_874574.1">
    <property type="nucleotide sequence ID" value="NC_005042.1"/>
</dbReference>
<dbReference type="RefSeq" id="WP_011124335.1">
    <property type="nucleotide sequence ID" value="NC_005042.1"/>
</dbReference>
<dbReference type="SMR" id="Q7VE34"/>
<dbReference type="STRING" id="167539.Pro_0180"/>
<dbReference type="EnsemblBacteria" id="AAP99226">
    <property type="protein sequence ID" value="AAP99226"/>
    <property type="gene ID" value="Pro_0180"/>
</dbReference>
<dbReference type="KEGG" id="pma:Pro_0180"/>
<dbReference type="PATRIC" id="fig|167539.5.peg.187"/>
<dbReference type="eggNOG" id="COG0061">
    <property type="taxonomic scope" value="Bacteria"/>
</dbReference>
<dbReference type="HOGENOM" id="CLU_008831_0_1_3"/>
<dbReference type="OrthoDB" id="9774737at2"/>
<dbReference type="Proteomes" id="UP000001420">
    <property type="component" value="Chromosome"/>
</dbReference>
<dbReference type="GO" id="GO:0005737">
    <property type="term" value="C:cytoplasm"/>
    <property type="evidence" value="ECO:0007669"/>
    <property type="project" value="UniProtKB-SubCell"/>
</dbReference>
<dbReference type="GO" id="GO:0005524">
    <property type="term" value="F:ATP binding"/>
    <property type="evidence" value="ECO:0007669"/>
    <property type="project" value="UniProtKB-KW"/>
</dbReference>
<dbReference type="GO" id="GO:0046872">
    <property type="term" value="F:metal ion binding"/>
    <property type="evidence" value="ECO:0007669"/>
    <property type="project" value="UniProtKB-UniRule"/>
</dbReference>
<dbReference type="GO" id="GO:0051287">
    <property type="term" value="F:NAD binding"/>
    <property type="evidence" value="ECO:0007669"/>
    <property type="project" value="UniProtKB-ARBA"/>
</dbReference>
<dbReference type="GO" id="GO:0003951">
    <property type="term" value="F:NAD+ kinase activity"/>
    <property type="evidence" value="ECO:0007669"/>
    <property type="project" value="UniProtKB-UniRule"/>
</dbReference>
<dbReference type="GO" id="GO:0019674">
    <property type="term" value="P:NAD metabolic process"/>
    <property type="evidence" value="ECO:0007669"/>
    <property type="project" value="InterPro"/>
</dbReference>
<dbReference type="GO" id="GO:0006741">
    <property type="term" value="P:NADP biosynthetic process"/>
    <property type="evidence" value="ECO:0007669"/>
    <property type="project" value="UniProtKB-UniRule"/>
</dbReference>
<dbReference type="Gene3D" id="3.40.50.10330">
    <property type="entry name" value="Probable inorganic polyphosphate/atp-NAD kinase, domain 1"/>
    <property type="match status" value="1"/>
</dbReference>
<dbReference type="Gene3D" id="2.60.200.30">
    <property type="entry name" value="Probable inorganic polyphosphate/atp-NAD kinase, domain 2"/>
    <property type="match status" value="1"/>
</dbReference>
<dbReference type="HAMAP" id="MF_00361">
    <property type="entry name" value="NAD_kinase"/>
    <property type="match status" value="1"/>
</dbReference>
<dbReference type="InterPro" id="IPR017438">
    <property type="entry name" value="ATP-NAD_kinase_N"/>
</dbReference>
<dbReference type="InterPro" id="IPR017437">
    <property type="entry name" value="ATP-NAD_kinase_PpnK-typ_C"/>
</dbReference>
<dbReference type="InterPro" id="IPR016064">
    <property type="entry name" value="NAD/diacylglycerol_kinase_sf"/>
</dbReference>
<dbReference type="InterPro" id="IPR002504">
    <property type="entry name" value="NADK"/>
</dbReference>
<dbReference type="NCBIfam" id="NF002731">
    <property type="entry name" value="PRK02645.1"/>
    <property type="match status" value="1"/>
</dbReference>
<dbReference type="PANTHER" id="PTHR20275">
    <property type="entry name" value="NAD KINASE"/>
    <property type="match status" value="1"/>
</dbReference>
<dbReference type="PANTHER" id="PTHR20275:SF0">
    <property type="entry name" value="NAD KINASE"/>
    <property type="match status" value="1"/>
</dbReference>
<dbReference type="Pfam" id="PF01513">
    <property type="entry name" value="NAD_kinase"/>
    <property type="match status" value="1"/>
</dbReference>
<dbReference type="Pfam" id="PF20143">
    <property type="entry name" value="NAD_kinase_C"/>
    <property type="match status" value="1"/>
</dbReference>
<dbReference type="SUPFAM" id="SSF111331">
    <property type="entry name" value="NAD kinase/diacylglycerol kinase-like"/>
    <property type="match status" value="1"/>
</dbReference>
<accession>Q7VE34</accession>
<sequence length="307" mass="33863">MKLELIWVIYKSGSKSAKEEALLCSRNIESLGIKVITAESGPLLNTCNNILNPNKQIPTLVIVLGGDGTVLGAARHLAMYEVPILSFNVGGNLGFLTHDRQLLKDESLWSRIQEDQFAIESRMMLKGRVESYLDTNDVGKKENFFWALNDIYFRSCSEDISPTCTLELKIDDEDVDIYRGDGVILSTPTGSTAYSMATGGPILHPGIEAIIVSAICPMSLSSRPIVVPAGSRLIIKPVGNKNQRVNIWQDGVSSALMQKGEQCVIEKARNHAQMLILEQSPSYFRTLTQKLHWAGSLVDNQNKMAPK</sequence>
<gene>
    <name evidence="1" type="primary">nadK1</name>
    <name type="ordered locus">Pro_0180</name>
</gene>
<evidence type="ECO:0000255" key="1">
    <source>
        <dbReference type="HAMAP-Rule" id="MF_00361"/>
    </source>
</evidence>
<protein>
    <recommendedName>
        <fullName evidence="1">NAD kinase 1</fullName>
        <ecNumber evidence="1">2.7.1.23</ecNumber>
    </recommendedName>
    <alternativeName>
        <fullName evidence="1">ATP-dependent NAD kinase 1</fullName>
    </alternativeName>
</protein>
<reference key="1">
    <citation type="journal article" date="2003" name="Proc. Natl. Acad. Sci. U.S.A.">
        <title>Genome sequence of the cyanobacterium Prochlorococcus marinus SS120, a nearly minimal oxyphototrophic genome.</title>
        <authorList>
            <person name="Dufresne A."/>
            <person name="Salanoubat M."/>
            <person name="Partensky F."/>
            <person name="Artiguenave F."/>
            <person name="Axmann I.M."/>
            <person name="Barbe V."/>
            <person name="Duprat S."/>
            <person name="Galperin M.Y."/>
            <person name="Koonin E.V."/>
            <person name="Le Gall F."/>
            <person name="Makarova K.S."/>
            <person name="Ostrowski M."/>
            <person name="Oztas S."/>
            <person name="Robert C."/>
            <person name="Rogozin I.B."/>
            <person name="Scanlan D.J."/>
            <person name="Tandeau de Marsac N."/>
            <person name="Weissenbach J."/>
            <person name="Wincker P."/>
            <person name="Wolf Y.I."/>
            <person name="Hess W.R."/>
        </authorList>
    </citation>
    <scope>NUCLEOTIDE SEQUENCE [LARGE SCALE GENOMIC DNA]</scope>
    <source>
        <strain>SARG / CCMP1375 / SS120</strain>
    </source>
</reference>